<comment type="function">
    <text evidence="1">Catalyzes the cyclization of GTP to (8S)-3',8-cyclo-7,8-dihydroguanosine 5'-triphosphate.</text>
</comment>
<comment type="catalytic activity">
    <reaction evidence="1">
        <text>GTP + AH2 + S-adenosyl-L-methionine = (8S)-3',8-cyclo-7,8-dihydroguanosine 5'-triphosphate + 5'-deoxyadenosine + L-methionine + A + H(+)</text>
        <dbReference type="Rhea" id="RHEA:49576"/>
        <dbReference type="ChEBI" id="CHEBI:13193"/>
        <dbReference type="ChEBI" id="CHEBI:15378"/>
        <dbReference type="ChEBI" id="CHEBI:17319"/>
        <dbReference type="ChEBI" id="CHEBI:17499"/>
        <dbReference type="ChEBI" id="CHEBI:37565"/>
        <dbReference type="ChEBI" id="CHEBI:57844"/>
        <dbReference type="ChEBI" id="CHEBI:59789"/>
        <dbReference type="ChEBI" id="CHEBI:131766"/>
        <dbReference type="EC" id="4.1.99.22"/>
    </reaction>
</comment>
<comment type="cofactor">
    <cofactor evidence="1">
        <name>[4Fe-4S] cluster</name>
        <dbReference type="ChEBI" id="CHEBI:49883"/>
    </cofactor>
    <text evidence="1">Binds 2 [4Fe-4S] clusters. Binds 1 [4Fe-4S] cluster coordinated with 3 cysteines and an exchangeable S-adenosyl-L-methionine and 1 [4Fe-4S] cluster coordinated with 3 cysteines and the GTP-derived substrate.</text>
</comment>
<comment type="pathway">
    <text evidence="1">Cofactor biosynthesis; molybdopterin biosynthesis.</text>
</comment>
<comment type="subunit">
    <text evidence="1">Monomer and homodimer.</text>
</comment>
<comment type="similarity">
    <text evidence="1">Belongs to the radical SAM superfamily. MoaA family.</text>
</comment>
<accession>Q3MC34</accession>
<reference key="1">
    <citation type="journal article" date="2014" name="Stand. Genomic Sci.">
        <title>Complete genome sequence of Anabaena variabilis ATCC 29413.</title>
        <authorList>
            <person name="Thiel T."/>
            <person name="Pratte B.S."/>
            <person name="Zhong J."/>
            <person name="Goodwin L."/>
            <person name="Copeland A."/>
            <person name="Lucas S."/>
            <person name="Han C."/>
            <person name="Pitluck S."/>
            <person name="Land M.L."/>
            <person name="Kyrpides N.C."/>
            <person name="Woyke T."/>
        </authorList>
    </citation>
    <scope>NUCLEOTIDE SEQUENCE [LARGE SCALE GENOMIC DNA]</scope>
    <source>
        <strain>ATCC 29413 / PCC 7937</strain>
    </source>
</reference>
<protein>
    <recommendedName>
        <fullName evidence="1">GTP 3',8-cyclase</fullName>
        <ecNumber evidence="1">4.1.99.22</ecNumber>
    </recommendedName>
    <alternativeName>
        <fullName evidence="1">Molybdenum cofactor biosynthesis protein A</fullName>
    </alternativeName>
</protein>
<name>MOAA_TRIV2</name>
<gene>
    <name evidence="1" type="primary">moaA</name>
    <name type="ordered locus">Ava_1830</name>
</gene>
<feature type="chain" id="PRO_1000054171" description="GTP 3',8-cyclase">
    <location>
        <begin position="1"/>
        <end position="328"/>
    </location>
</feature>
<feature type="domain" description="Radical SAM core" evidence="2">
    <location>
        <begin position="1"/>
        <end position="229"/>
    </location>
</feature>
<feature type="binding site" evidence="1">
    <location>
        <position position="8"/>
    </location>
    <ligand>
        <name>GTP</name>
        <dbReference type="ChEBI" id="CHEBI:37565"/>
    </ligand>
</feature>
<feature type="binding site" evidence="1">
    <location>
        <position position="15"/>
    </location>
    <ligand>
        <name>[4Fe-4S] cluster</name>
        <dbReference type="ChEBI" id="CHEBI:49883"/>
        <label>1</label>
        <note>4Fe-4S-S-AdoMet</note>
    </ligand>
</feature>
<feature type="binding site" evidence="1">
    <location>
        <position position="19"/>
    </location>
    <ligand>
        <name>[4Fe-4S] cluster</name>
        <dbReference type="ChEBI" id="CHEBI:49883"/>
        <label>1</label>
        <note>4Fe-4S-S-AdoMet</note>
    </ligand>
</feature>
<feature type="binding site" evidence="1">
    <location>
        <position position="21"/>
    </location>
    <ligand>
        <name>S-adenosyl-L-methionine</name>
        <dbReference type="ChEBI" id="CHEBI:59789"/>
    </ligand>
</feature>
<feature type="binding site" evidence="1">
    <location>
        <position position="22"/>
    </location>
    <ligand>
        <name>[4Fe-4S] cluster</name>
        <dbReference type="ChEBI" id="CHEBI:49883"/>
        <label>1</label>
        <note>4Fe-4S-S-AdoMet</note>
    </ligand>
</feature>
<feature type="binding site" evidence="1">
    <location>
        <position position="60"/>
    </location>
    <ligand>
        <name>GTP</name>
        <dbReference type="ChEBI" id="CHEBI:37565"/>
    </ligand>
</feature>
<feature type="binding site" evidence="1">
    <location>
        <position position="64"/>
    </location>
    <ligand>
        <name>S-adenosyl-L-methionine</name>
        <dbReference type="ChEBI" id="CHEBI:59789"/>
    </ligand>
</feature>
<feature type="binding site" evidence="1">
    <location>
        <position position="91"/>
    </location>
    <ligand>
        <name>GTP</name>
        <dbReference type="ChEBI" id="CHEBI:37565"/>
    </ligand>
</feature>
<feature type="binding site" evidence="1">
    <location>
        <position position="115"/>
    </location>
    <ligand>
        <name>S-adenosyl-L-methionine</name>
        <dbReference type="ChEBI" id="CHEBI:59789"/>
    </ligand>
</feature>
<feature type="binding site" evidence="1">
    <location>
        <position position="155"/>
    </location>
    <ligand>
        <name>GTP</name>
        <dbReference type="ChEBI" id="CHEBI:37565"/>
    </ligand>
</feature>
<feature type="binding site" evidence="1">
    <location>
        <position position="189"/>
    </location>
    <ligand>
        <name>S-adenosyl-L-methionine</name>
        <dbReference type="ChEBI" id="CHEBI:59789"/>
    </ligand>
</feature>
<feature type="binding site" evidence="1">
    <location>
        <position position="252"/>
    </location>
    <ligand>
        <name>[4Fe-4S] cluster</name>
        <dbReference type="ChEBI" id="CHEBI:49883"/>
        <label>2</label>
        <note>4Fe-4S-substrate</note>
    </ligand>
</feature>
<feature type="binding site" evidence="1">
    <location>
        <position position="255"/>
    </location>
    <ligand>
        <name>[4Fe-4S] cluster</name>
        <dbReference type="ChEBI" id="CHEBI:49883"/>
        <label>2</label>
        <note>4Fe-4S-substrate</note>
    </ligand>
</feature>
<feature type="binding site" evidence="1">
    <location>
        <begin position="257"/>
        <end position="259"/>
    </location>
    <ligand>
        <name>GTP</name>
        <dbReference type="ChEBI" id="CHEBI:37565"/>
    </ligand>
</feature>
<feature type="binding site" evidence="1">
    <location>
        <position position="269"/>
    </location>
    <ligand>
        <name>[4Fe-4S] cluster</name>
        <dbReference type="ChEBI" id="CHEBI:49883"/>
        <label>2</label>
        <note>4Fe-4S-substrate</note>
    </ligand>
</feature>
<organism>
    <name type="scientific">Trichormus variabilis (strain ATCC 29413 / PCC 7937)</name>
    <name type="common">Anabaena variabilis</name>
    <dbReference type="NCBI Taxonomy" id="240292"/>
    <lineage>
        <taxon>Bacteria</taxon>
        <taxon>Bacillati</taxon>
        <taxon>Cyanobacteriota</taxon>
        <taxon>Cyanophyceae</taxon>
        <taxon>Nostocales</taxon>
        <taxon>Nostocaceae</taxon>
        <taxon>Trichormus</taxon>
    </lineage>
</organism>
<proteinExistence type="inferred from homology"/>
<sequence length="328" mass="36905">MNQVDYLRISLIDRCNFRCQYCMPEGSELDYILKQQLLTDEELLTLVQEVFIPVGFRQFRLTGGEPLLRPRVVDLVGAIASLPQTQDLSMTTNGFLLAPIAQNLYDAGLRRINISLDSLDPHIFDQIIGSHGRSRWQQVWDGIQAAHRVGFDPLKLNVVVIPGVNDHEILDLAALTIDKQWHVRFIEFMPIGNGELFGDRGWVSSSQLRQQIRDRWGLTDAQVRGSGPADVFQIPGAKGTLGFISQMSECFCDRCNRMRLSADGWLRPCLLNETGQLDLKTSLRSGVSIHQLREQVRHLLAIKPEINYKGRDSGTTGAYSRTMSQIGG</sequence>
<evidence type="ECO:0000255" key="1">
    <source>
        <dbReference type="HAMAP-Rule" id="MF_01225"/>
    </source>
</evidence>
<evidence type="ECO:0000255" key="2">
    <source>
        <dbReference type="PROSITE-ProRule" id="PRU01266"/>
    </source>
</evidence>
<keyword id="KW-0004">4Fe-4S</keyword>
<keyword id="KW-0342">GTP-binding</keyword>
<keyword id="KW-0408">Iron</keyword>
<keyword id="KW-0411">Iron-sulfur</keyword>
<keyword id="KW-0456">Lyase</keyword>
<keyword id="KW-0479">Metal-binding</keyword>
<keyword id="KW-0501">Molybdenum cofactor biosynthesis</keyword>
<keyword id="KW-0547">Nucleotide-binding</keyword>
<keyword id="KW-0949">S-adenosyl-L-methionine</keyword>
<dbReference type="EC" id="4.1.99.22" evidence="1"/>
<dbReference type="EMBL" id="CP000117">
    <property type="protein sequence ID" value="ABA21452.1"/>
    <property type="molecule type" value="Genomic_DNA"/>
</dbReference>
<dbReference type="SMR" id="Q3MC34"/>
<dbReference type="STRING" id="240292.Ava_1830"/>
<dbReference type="KEGG" id="ava:Ava_1830"/>
<dbReference type="eggNOG" id="COG2896">
    <property type="taxonomic scope" value="Bacteria"/>
</dbReference>
<dbReference type="HOGENOM" id="CLU_009273_0_1_3"/>
<dbReference type="UniPathway" id="UPA00344"/>
<dbReference type="Proteomes" id="UP000002533">
    <property type="component" value="Chromosome"/>
</dbReference>
<dbReference type="GO" id="GO:0051539">
    <property type="term" value="F:4 iron, 4 sulfur cluster binding"/>
    <property type="evidence" value="ECO:0007669"/>
    <property type="project" value="UniProtKB-UniRule"/>
</dbReference>
<dbReference type="GO" id="GO:0061799">
    <property type="term" value="F:cyclic pyranopterin monophosphate synthase activity"/>
    <property type="evidence" value="ECO:0007669"/>
    <property type="project" value="TreeGrafter"/>
</dbReference>
<dbReference type="GO" id="GO:0061798">
    <property type="term" value="F:GTP 3',8'-cyclase activity"/>
    <property type="evidence" value="ECO:0007669"/>
    <property type="project" value="UniProtKB-UniRule"/>
</dbReference>
<dbReference type="GO" id="GO:0005525">
    <property type="term" value="F:GTP binding"/>
    <property type="evidence" value="ECO:0007669"/>
    <property type="project" value="UniProtKB-UniRule"/>
</dbReference>
<dbReference type="GO" id="GO:0046872">
    <property type="term" value="F:metal ion binding"/>
    <property type="evidence" value="ECO:0007669"/>
    <property type="project" value="UniProtKB-KW"/>
</dbReference>
<dbReference type="GO" id="GO:1904047">
    <property type="term" value="F:S-adenosyl-L-methionine binding"/>
    <property type="evidence" value="ECO:0007669"/>
    <property type="project" value="UniProtKB-UniRule"/>
</dbReference>
<dbReference type="GO" id="GO:0006777">
    <property type="term" value="P:Mo-molybdopterin cofactor biosynthetic process"/>
    <property type="evidence" value="ECO:0007669"/>
    <property type="project" value="UniProtKB-UniRule"/>
</dbReference>
<dbReference type="CDD" id="cd01335">
    <property type="entry name" value="Radical_SAM"/>
    <property type="match status" value="1"/>
</dbReference>
<dbReference type="CDD" id="cd21117">
    <property type="entry name" value="Twitch_MoaA"/>
    <property type="match status" value="1"/>
</dbReference>
<dbReference type="Gene3D" id="3.20.20.70">
    <property type="entry name" value="Aldolase class I"/>
    <property type="match status" value="1"/>
</dbReference>
<dbReference type="HAMAP" id="MF_01225_B">
    <property type="entry name" value="MoaA_B"/>
    <property type="match status" value="1"/>
</dbReference>
<dbReference type="InterPro" id="IPR013785">
    <property type="entry name" value="Aldolase_TIM"/>
</dbReference>
<dbReference type="InterPro" id="IPR006638">
    <property type="entry name" value="Elp3/MiaA/NifB-like_rSAM"/>
</dbReference>
<dbReference type="InterPro" id="IPR013483">
    <property type="entry name" value="MoaA"/>
</dbReference>
<dbReference type="InterPro" id="IPR000385">
    <property type="entry name" value="MoaA_NifB_PqqE_Fe-S-bd_CS"/>
</dbReference>
<dbReference type="InterPro" id="IPR010505">
    <property type="entry name" value="MoaA_twitch"/>
</dbReference>
<dbReference type="InterPro" id="IPR050105">
    <property type="entry name" value="MoCo_biosynth_MoaA/MoaC"/>
</dbReference>
<dbReference type="InterPro" id="IPR007197">
    <property type="entry name" value="rSAM"/>
</dbReference>
<dbReference type="NCBIfam" id="TIGR02666">
    <property type="entry name" value="moaA"/>
    <property type="match status" value="1"/>
</dbReference>
<dbReference type="PANTHER" id="PTHR22960:SF0">
    <property type="entry name" value="MOLYBDENUM COFACTOR BIOSYNTHESIS PROTEIN 1"/>
    <property type="match status" value="1"/>
</dbReference>
<dbReference type="PANTHER" id="PTHR22960">
    <property type="entry name" value="MOLYBDOPTERIN COFACTOR SYNTHESIS PROTEIN A"/>
    <property type="match status" value="1"/>
</dbReference>
<dbReference type="Pfam" id="PF06463">
    <property type="entry name" value="Mob_synth_C"/>
    <property type="match status" value="1"/>
</dbReference>
<dbReference type="Pfam" id="PF04055">
    <property type="entry name" value="Radical_SAM"/>
    <property type="match status" value="1"/>
</dbReference>
<dbReference type="SFLD" id="SFLDG01383">
    <property type="entry name" value="cyclic_pyranopterin_phosphate"/>
    <property type="match status" value="1"/>
</dbReference>
<dbReference type="SFLD" id="SFLDG01216">
    <property type="entry name" value="thioether_bond_formation_requi"/>
    <property type="match status" value="1"/>
</dbReference>
<dbReference type="SMART" id="SM00729">
    <property type="entry name" value="Elp3"/>
    <property type="match status" value="1"/>
</dbReference>
<dbReference type="SUPFAM" id="SSF102114">
    <property type="entry name" value="Radical SAM enzymes"/>
    <property type="match status" value="1"/>
</dbReference>
<dbReference type="PROSITE" id="PS01305">
    <property type="entry name" value="MOAA_NIFB_PQQE"/>
    <property type="match status" value="1"/>
</dbReference>
<dbReference type="PROSITE" id="PS51918">
    <property type="entry name" value="RADICAL_SAM"/>
    <property type="match status" value="1"/>
</dbReference>